<keyword id="KW-1185">Reference proteome</keyword>
<comment type="similarity">
    <text evidence="1">Belongs to the UPF0757 family.</text>
</comment>
<comment type="sequence caution" evidence="2">
    <conflict type="erroneous initiation">
        <sequence resource="EMBL-CDS" id="ABJ00586"/>
    </conflict>
</comment>
<organism>
    <name type="scientific">Escherichia coli O1:K1 / APEC</name>
    <dbReference type="NCBI Taxonomy" id="405955"/>
    <lineage>
        <taxon>Bacteria</taxon>
        <taxon>Pseudomonadati</taxon>
        <taxon>Pseudomonadota</taxon>
        <taxon>Gammaproteobacteria</taxon>
        <taxon>Enterobacterales</taxon>
        <taxon>Enterobacteriaceae</taxon>
        <taxon>Escherichia</taxon>
    </lineage>
</organism>
<accession>A1AA96</accession>
<dbReference type="EMBL" id="CP000468">
    <property type="protein sequence ID" value="ABJ00586.1"/>
    <property type="status" value="ALT_INIT"/>
    <property type="molecule type" value="Genomic_DNA"/>
</dbReference>
<dbReference type="RefSeq" id="WP_000726974.1">
    <property type="nucleotide sequence ID" value="NZ_CADILS010000001.1"/>
</dbReference>
<dbReference type="KEGG" id="ecv:APECO1_285"/>
<dbReference type="HOGENOM" id="CLU_164687_0_0_6"/>
<dbReference type="Proteomes" id="UP000008216">
    <property type="component" value="Chromosome"/>
</dbReference>
<dbReference type="HAMAP" id="MF_01455">
    <property type="entry name" value="UPF0757"/>
    <property type="match status" value="1"/>
</dbReference>
<dbReference type="InterPro" id="IPR025693">
    <property type="entry name" value="Gly-zipper_OmpA-like_dom"/>
</dbReference>
<dbReference type="InterPro" id="IPR027367">
    <property type="entry name" value="Gly-zipper_YMGG"/>
</dbReference>
<dbReference type="InterPro" id="IPR022833">
    <property type="entry name" value="UPF0757_YmgG"/>
</dbReference>
<dbReference type="Pfam" id="PF13436">
    <property type="entry name" value="Gly-zipper_OmpA"/>
    <property type="match status" value="1"/>
</dbReference>
<dbReference type="Pfam" id="PF13441">
    <property type="entry name" value="Gly-zipper_YMGG"/>
    <property type="match status" value="1"/>
</dbReference>
<gene>
    <name evidence="1" type="primary">ymgG</name>
    <name type="ordered locus">Ecok1_10920</name>
    <name type="ORF">APECO1_285</name>
</gene>
<sequence>MKKKILAFGLISALFCSTPAMADMNRTTKGALLGAGVGLLTGNGVNGVLKGAAVGAGVGAVTEKGRDGKNARKGAKVGAAVGAVTGVLTGNGLEGAIKGAVIGGTGGAILGKMK</sequence>
<protein>
    <recommendedName>
        <fullName evidence="1">UPF0757 protein YmgG</fullName>
    </recommendedName>
</protein>
<reference key="1">
    <citation type="journal article" date="2007" name="J. Bacteriol.">
        <title>The genome sequence of avian pathogenic Escherichia coli strain O1:K1:H7 shares strong similarities with human extraintestinal pathogenic E. coli genomes.</title>
        <authorList>
            <person name="Johnson T.J."/>
            <person name="Kariyawasam S."/>
            <person name="Wannemuehler Y."/>
            <person name="Mangiamele P."/>
            <person name="Johnson S.J."/>
            <person name="Doetkott C."/>
            <person name="Skyberg J.A."/>
            <person name="Lynne A.M."/>
            <person name="Johnson J.R."/>
            <person name="Nolan L.K."/>
        </authorList>
    </citation>
    <scope>NUCLEOTIDE SEQUENCE [LARGE SCALE GENOMIC DNA]</scope>
</reference>
<evidence type="ECO:0000255" key="1">
    <source>
        <dbReference type="HAMAP-Rule" id="MF_01455"/>
    </source>
</evidence>
<evidence type="ECO:0000305" key="2"/>
<name>YMGG_ECOK1</name>
<proteinExistence type="inferred from homology"/>
<feature type="chain" id="PRO_0000388957" description="UPF0757 protein YmgG">
    <location>
        <begin position="1"/>
        <end position="114"/>
    </location>
</feature>